<feature type="chain" id="PRO_0000327815" description="Pyridoxal kinase">
    <location>
        <begin position="1"/>
        <end position="302"/>
    </location>
</feature>
<feature type="binding site" evidence="1">
    <location>
        <position position="10"/>
    </location>
    <ligand>
        <name>substrate</name>
    </ligand>
</feature>
<feature type="binding site" evidence="1">
    <location>
        <position position="45"/>
    </location>
    <ligand>
        <name>substrate</name>
    </ligand>
</feature>
<feature type="binding site" evidence="1">
    <location>
        <position position="122"/>
    </location>
    <ligand>
        <name>substrate</name>
    </ligand>
</feature>
<feature type="binding site" evidence="1">
    <location>
        <begin position="181"/>
        <end position="182"/>
    </location>
    <ligand>
        <name>ATP</name>
        <dbReference type="ChEBI" id="CHEBI:30616"/>
    </ligand>
</feature>
<feature type="binding site" evidence="1">
    <location>
        <begin position="215"/>
        <end position="227"/>
    </location>
    <ligand>
        <name>ATP</name>
        <dbReference type="ChEBI" id="CHEBI:30616"/>
    </ligand>
</feature>
<feature type="binding site" evidence="1">
    <location>
        <position position="228"/>
    </location>
    <ligand>
        <name>substrate</name>
    </ligand>
</feature>
<feature type="sequence conflict" description="In Ref. 1; AAG01573." evidence="4" ref="1">
    <original>V</original>
    <variation>L</variation>
    <location>
        <position position="5"/>
    </location>
</feature>
<feature type="sequence conflict" description="In Ref. 1; AAG01573." evidence="4" ref="1">
    <location>
        <position position="203"/>
    </location>
</feature>
<feature type="sequence conflict" description="In Ref. 1; AAG01573." evidence="4" ref="1">
    <original>E</original>
    <variation>V</variation>
    <location>
        <position position="262"/>
    </location>
</feature>
<evidence type="ECO:0000250" key="1"/>
<evidence type="ECO:0000269" key="2">
    <source>
    </source>
</evidence>
<evidence type="ECO:0000303" key="3">
    <source>
    </source>
</evidence>
<evidence type="ECO:0000305" key="4"/>
<reference key="1">
    <citation type="journal article" date="2000" name="FEMS Microbiol. Lett.">
        <title>Pyridoxal kinase knockout of Dictyostelium complemented by the human homologue.</title>
        <authorList>
            <person name="Guo K."/>
            <person name="Newell P.C."/>
        </authorList>
    </citation>
    <scope>NUCLEOTIDE SEQUENCE [GENOMIC DNA]</scope>
    <scope>FUNCTION</scope>
    <scope>CATALYTIC ACTIVITY</scope>
    <scope>BIOPHYSICOCHEMICAL PROPERTIES</scope>
    <source>
        <strain>AX2</strain>
    </source>
</reference>
<reference key="2">
    <citation type="journal article" date="2005" name="Nature">
        <title>The genome of the social amoeba Dictyostelium discoideum.</title>
        <authorList>
            <person name="Eichinger L."/>
            <person name="Pachebat J.A."/>
            <person name="Gloeckner G."/>
            <person name="Rajandream M.A."/>
            <person name="Sucgang R."/>
            <person name="Berriman M."/>
            <person name="Song J."/>
            <person name="Olsen R."/>
            <person name="Szafranski K."/>
            <person name="Xu Q."/>
            <person name="Tunggal B."/>
            <person name="Kummerfeld S."/>
            <person name="Madera M."/>
            <person name="Konfortov B.A."/>
            <person name="Rivero F."/>
            <person name="Bankier A.T."/>
            <person name="Lehmann R."/>
            <person name="Hamlin N."/>
            <person name="Davies R."/>
            <person name="Gaudet P."/>
            <person name="Fey P."/>
            <person name="Pilcher K."/>
            <person name="Chen G."/>
            <person name="Saunders D."/>
            <person name="Sodergren E.J."/>
            <person name="Davis P."/>
            <person name="Kerhornou A."/>
            <person name="Nie X."/>
            <person name="Hall N."/>
            <person name="Anjard C."/>
            <person name="Hemphill L."/>
            <person name="Bason N."/>
            <person name="Farbrother P."/>
            <person name="Desany B."/>
            <person name="Just E."/>
            <person name="Morio T."/>
            <person name="Rost R."/>
            <person name="Churcher C.M."/>
            <person name="Cooper J."/>
            <person name="Haydock S."/>
            <person name="van Driessche N."/>
            <person name="Cronin A."/>
            <person name="Goodhead I."/>
            <person name="Muzny D.M."/>
            <person name="Mourier T."/>
            <person name="Pain A."/>
            <person name="Lu M."/>
            <person name="Harper D."/>
            <person name="Lindsay R."/>
            <person name="Hauser H."/>
            <person name="James K.D."/>
            <person name="Quiles M."/>
            <person name="Madan Babu M."/>
            <person name="Saito T."/>
            <person name="Buchrieser C."/>
            <person name="Wardroper A."/>
            <person name="Felder M."/>
            <person name="Thangavelu M."/>
            <person name="Johnson D."/>
            <person name="Knights A."/>
            <person name="Loulseged H."/>
            <person name="Mungall K.L."/>
            <person name="Oliver K."/>
            <person name="Price C."/>
            <person name="Quail M.A."/>
            <person name="Urushihara H."/>
            <person name="Hernandez J."/>
            <person name="Rabbinowitsch E."/>
            <person name="Steffen D."/>
            <person name="Sanders M."/>
            <person name="Ma J."/>
            <person name="Kohara Y."/>
            <person name="Sharp S."/>
            <person name="Simmonds M.N."/>
            <person name="Spiegler S."/>
            <person name="Tivey A."/>
            <person name="Sugano S."/>
            <person name="White B."/>
            <person name="Walker D."/>
            <person name="Woodward J.R."/>
            <person name="Winckler T."/>
            <person name="Tanaka Y."/>
            <person name="Shaulsky G."/>
            <person name="Schleicher M."/>
            <person name="Weinstock G.M."/>
            <person name="Rosenthal A."/>
            <person name="Cox E.C."/>
            <person name="Chisholm R.L."/>
            <person name="Gibbs R.A."/>
            <person name="Loomis W.F."/>
            <person name="Platzer M."/>
            <person name="Kay R.R."/>
            <person name="Williams J.G."/>
            <person name="Dear P.H."/>
            <person name="Noegel A.A."/>
            <person name="Barrell B.G."/>
            <person name="Kuspa A."/>
        </authorList>
    </citation>
    <scope>NUCLEOTIDE SEQUENCE [LARGE SCALE GENOMIC DNA]</scope>
    <source>
        <strain>AX4</strain>
    </source>
</reference>
<comment type="function">
    <text evidence="2">Required for synthesis of pyridoxal-5-phosphate from vitamin B6.</text>
</comment>
<comment type="catalytic activity">
    <reaction evidence="2">
        <text>pyridoxal + ATP = pyridoxal 5'-phosphate + ADP + H(+)</text>
        <dbReference type="Rhea" id="RHEA:10224"/>
        <dbReference type="ChEBI" id="CHEBI:15378"/>
        <dbReference type="ChEBI" id="CHEBI:17310"/>
        <dbReference type="ChEBI" id="CHEBI:30616"/>
        <dbReference type="ChEBI" id="CHEBI:456216"/>
        <dbReference type="ChEBI" id="CHEBI:597326"/>
        <dbReference type="EC" id="2.7.1.35"/>
    </reaction>
    <physiologicalReaction direction="left-to-right" evidence="2">
        <dbReference type="Rhea" id="RHEA:10225"/>
    </physiologicalReaction>
</comment>
<comment type="cofactor">
    <cofactor evidence="1">
        <name>a divalent metal cation</name>
        <dbReference type="ChEBI" id="CHEBI:60240"/>
    </cofactor>
</comment>
<comment type="biophysicochemical properties">
    <kinetics>
        <KM evidence="2">8.7 uM for pyridoxal (at 37 degrees Celsius)</KM>
    </kinetics>
</comment>
<comment type="pathway">
    <text>Cofactor metabolism; pyridoxal 5'-phosphate salvage; pyridoxal 5'-phosphate from pyridoxal: step 1/1.</text>
</comment>
<comment type="subunit">
    <text evidence="1">Homodimer.</text>
</comment>
<comment type="subcellular location">
    <subcellularLocation>
        <location evidence="1">Cytoplasm</location>
    </subcellularLocation>
</comment>
<comment type="similarity">
    <text evidence="4">Belongs to the pyridoxine kinase family.</text>
</comment>
<protein>
    <recommendedName>
        <fullName evidence="3">Pyridoxal kinase</fullName>
        <ecNumber evidence="2">2.7.1.35</ecNumber>
    </recommendedName>
    <alternativeName>
        <fullName>Pyridoxine kinase</fullName>
    </alternativeName>
</protein>
<dbReference type="EC" id="2.7.1.35" evidence="2"/>
<dbReference type="EMBL" id="AF136753">
    <property type="protein sequence ID" value="AAG01573.1"/>
    <property type="molecule type" value="Genomic_DNA"/>
</dbReference>
<dbReference type="EMBL" id="AAFI02000004">
    <property type="protein sequence ID" value="EAL72903.1"/>
    <property type="molecule type" value="Genomic_DNA"/>
</dbReference>
<dbReference type="RefSeq" id="XP_647011.1">
    <property type="nucleotide sequence ID" value="XM_641919.1"/>
</dbReference>
<dbReference type="SMR" id="Q55EK9"/>
<dbReference type="FunCoup" id="Q55EK9">
    <property type="interactions" value="341"/>
</dbReference>
<dbReference type="STRING" id="44689.Q55EK9"/>
<dbReference type="PaxDb" id="44689-DDB0191114"/>
<dbReference type="EnsemblProtists" id="EAL72903">
    <property type="protein sequence ID" value="EAL72903"/>
    <property type="gene ID" value="DDB_G0268628"/>
</dbReference>
<dbReference type="GeneID" id="8616704"/>
<dbReference type="KEGG" id="ddi:DDB_G0268628"/>
<dbReference type="dictyBase" id="DDB_G0268628">
    <property type="gene designation" value="pykA"/>
</dbReference>
<dbReference type="VEuPathDB" id="AmoebaDB:DDB_G0268628"/>
<dbReference type="eggNOG" id="KOG2599">
    <property type="taxonomic scope" value="Eukaryota"/>
</dbReference>
<dbReference type="HOGENOM" id="CLU_046496_1_1_1"/>
<dbReference type="InParanoid" id="Q55EK9"/>
<dbReference type="OMA" id="HTQYGQW"/>
<dbReference type="PhylomeDB" id="Q55EK9"/>
<dbReference type="Reactome" id="R-DDI-6798695">
    <property type="pathway name" value="Neutrophil degranulation"/>
</dbReference>
<dbReference type="Reactome" id="R-DDI-964975">
    <property type="pathway name" value="Vitamin B6 activation to pyridoxal phosphate"/>
</dbReference>
<dbReference type="SABIO-RK" id="Q55EK9"/>
<dbReference type="UniPathway" id="UPA01068">
    <property type="reaction ID" value="UER00298"/>
</dbReference>
<dbReference type="PRO" id="PR:Q55EK9"/>
<dbReference type="Proteomes" id="UP000002195">
    <property type="component" value="Chromosome 1"/>
</dbReference>
<dbReference type="GO" id="GO:0005829">
    <property type="term" value="C:cytosol"/>
    <property type="evidence" value="ECO:0000318"/>
    <property type="project" value="GO_Central"/>
</dbReference>
<dbReference type="GO" id="GO:0005524">
    <property type="term" value="F:ATP binding"/>
    <property type="evidence" value="ECO:0007669"/>
    <property type="project" value="UniProtKB-KW"/>
</dbReference>
<dbReference type="GO" id="GO:0046872">
    <property type="term" value="F:metal ion binding"/>
    <property type="evidence" value="ECO:0007669"/>
    <property type="project" value="UniProtKB-KW"/>
</dbReference>
<dbReference type="GO" id="GO:0008478">
    <property type="term" value="F:pyridoxal kinase activity"/>
    <property type="evidence" value="ECO:0000314"/>
    <property type="project" value="dictyBase"/>
</dbReference>
<dbReference type="GO" id="GO:0031152">
    <property type="term" value="P:aggregation involved in sorocarp development"/>
    <property type="evidence" value="ECO:0000315"/>
    <property type="project" value="dictyBase"/>
</dbReference>
<dbReference type="GO" id="GO:0019954">
    <property type="term" value="P:asexual reproduction"/>
    <property type="evidence" value="ECO:0000315"/>
    <property type="project" value="dictyBase"/>
</dbReference>
<dbReference type="GO" id="GO:0009443">
    <property type="term" value="P:pyridoxal 5'-phosphate salvage"/>
    <property type="evidence" value="ECO:0000318"/>
    <property type="project" value="GO_Central"/>
</dbReference>
<dbReference type="GO" id="GO:0042816">
    <property type="term" value="P:vitamin B6 metabolic process"/>
    <property type="evidence" value="ECO:0000305"/>
    <property type="project" value="dictyBase"/>
</dbReference>
<dbReference type="CDD" id="cd01173">
    <property type="entry name" value="pyridoxal_pyridoxamine_kinase"/>
    <property type="match status" value="1"/>
</dbReference>
<dbReference type="Gene3D" id="3.40.1190.20">
    <property type="match status" value="1"/>
</dbReference>
<dbReference type="InterPro" id="IPR013749">
    <property type="entry name" value="PM/HMP-P_kinase-1"/>
</dbReference>
<dbReference type="InterPro" id="IPR004625">
    <property type="entry name" value="PyrdxlKinase"/>
</dbReference>
<dbReference type="InterPro" id="IPR029056">
    <property type="entry name" value="Ribokinase-like"/>
</dbReference>
<dbReference type="NCBIfam" id="TIGR00687">
    <property type="entry name" value="pyridox_kin"/>
    <property type="match status" value="1"/>
</dbReference>
<dbReference type="PANTHER" id="PTHR10534">
    <property type="entry name" value="PYRIDOXAL KINASE"/>
    <property type="match status" value="1"/>
</dbReference>
<dbReference type="PANTHER" id="PTHR10534:SF2">
    <property type="entry name" value="PYRIDOXAL KINASE"/>
    <property type="match status" value="1"/>
</dbReference>
<dbReference type="Pfam" id="PF08543">
    <property type="entry name" value="Phos_pyr_kin"/>
    <property type="match status" value="1"/>
</dbReference>
<dbReference type="SUPFAM" id="SSF53613">
    <property type="entry name" value="Ribokinase-like"/>
    <property type="match status" value="1"/>
</dbReference>
<gene>
    <name type="primary">pykA</name>
    <name type="ORF">DDB_G0268628</name>
</gene>
<accession>Q55EK9</accession>
<accession>Q9GV94</accession>
<proteinExistence type="evidence at protein level"/>
<name>PDXK_DICDI</name>
<sequence>MEPKVLSIQSWVCHGYVGNKCAVFALQHLGIEVDPINSVHLSNNTAYPTWKGESLTPNKLGDLFQGLEDNHLTSNYTHVLTGYNNSVQTLHTVLKIVKKLKSENPNLIYVCDPVLGDNNELYVPEDLVEVYKNEVIPNADYIFPNQTEVEFLTGIKIKNDQDALKAIDQFHKMGVKNVVITSLFFDTNPNDIIVIGSTINDDDNNNKYNQFKIKVGPKFNDYYTGTGDLLSSLLLGWSIREPTDLSLVCEKAISILYNIINETHNSKKSIPSNKEKQYYELRLVQSRKFIENSEIRFKSEKL</sequence>
<keyword id="KW-0067">ATP-binding</keyword>
<keyword id="KW-0963">Cytoplasm</keyword>
<keyword id="KW-0418">Kinase</keyword>
<keyword id="KW-0479">Metal-binding</keyword>
<keyword id="KW-0547">Nucleotide-binding</keyword>
<keyword id="KW-1185">Reference proteome</keyword>
<keyword id="KW-0808">Transferase</keyword>
<organism>
    <name type="scientific">Dictyostelium discoideum</name>
    <name type="common">Social amoeba</name>
    <dbReference type="NCBI Taxonomy" id="44689"/>
    <lineage>
        <taxon>Eukaryota</taxon>
        <taxon>Amoebozoa</taxon>
        <taxon>Evosea</taxon>
        <taxon>Eumycetozoa</taxon>
        <taxon>Dictyostelia</taxon>
        <taxon>Dictyosteliales</taxon>
        <taxon>Dictyosteliaceae</taxon>
        <taxon>Dictyostelium</taxon>
    </lineage>
</organism>